<name>RL28_LEGPC</name>
<accession>A5IHB6</accession>
<sequence length="78" mass="9084">MSRVCQVTGKRPMVGHKVSHANNKTKRRFLPNIQNHKFWVEEENRFVTLRLSTKGMRIIDKLGIKAVLDKIRAKGEKI</sequence>
<protein>
    <recommendedName>
        <fullName evidence="1">Large ribosomal subunit protein bL28</fullName>
    </recommendedName>
    <alternativeName>
        <fullName evidence="2">50S ribosomal protein L28</fullName>
    </alternativeName>
</protein>
<comment type="similarity">
    <text evidence="1">Belongs to the bacterial ribosomal protein bL28 family.</text>
</comment>
<organism>
    <name type="scientific">Legionella pneumophila (strain Corby)</name>
    <dbReference type="NCBI Taxonomy" id="400673"/>
    <lineage>
        <taxon>Bacteria</taxon>
        <taxon>Pseudomonadati</taxon>
        <taxon>Pseudomonadota</taxon>
        <taxon>Gammaproteobacteria</taxon>
        <taxon>Legionellales</taxon>
        <taxon>Legionellaceae</taxon>
        <taxon>Legionella</taxon>
    </lineage>
</organism>
<keyword id="KW-0687">Ribonucleoprotein</keyword>
<keyword id="KW-0689">Ribosomal protein</keyword>
<proteinExistence type="inferred from homology"/>
<dbReference type="EMBL" id="CP000675">
    <property type="protein sequence ID" value="ABQ56766.1"/>
    <property type="molecule type" value="Genomic_DNA"/>
</dbReference>
<dbReference type="RefSeq" id="WP_010946227.1">
    <property type="nucleotide sequence ID" value="NZ_JAPMSS010000006.1"/>
</dbReference>
<dbReference type="SMR" id="A5IHB6"/>
<dbReference type="GeneID" id="57034480"/>
<dbReference type="KEGG" id="lpc:LPC_2865"/>
<dbReference type="HOGENOM" id="CLU_064548_3_1_6"/>
<dbReference type="GO" id="GO:0022625">
    <property type="term" value="C:cytosolic large ribosomal subunit"/>
    <property type="evidence" value="ECO:0007669"/>
    <property type="project" value="TreeGrafter"/>
</dbReference>
<dbReference type="GO" id="GO:0003735">
    <property type="term" value="F:structural constituent of ribosome"/>
    <property type="evidence" value="ECO:0007669"/>
    <property type="project" value="InterPro"/>
</dbReference>
<dbReference type="GO" id="GO:0006412">
    <property type="term" value="P:translation"/>
    <property type="evidence" value="ECO:0007669"/>
    <property type="project" value="UniProtKB-UniRule"/>
</dbReference>
<dbReference type="FunFam" id="2.30.170.40:FF:000001">
    <property type="entry name" value="50S ribosomal protein L28"/>
    <property type="match status" value="1"/>
</dbReference>
<dbReference type="Gene3D" id="2.30.170.40">
    <property type="entry name" value="Ribosomal protein L28/L24"/>
    <property type="match status" value="1"/>
</dbReference>
<dbReference type="HAMAP" id="MF_00373">
    <property type="entry name" value="Ribosomal_bL28"/>
    <property type="match status" value="1"/>
</dbReference>
<dbReference type="InterPro" id="IPR026569">
    <property type="entry name" value="Ribosomal_bL28"/>
</dbReference>
<dbReference type="InterPro" id="IPR034704">
    <property type="entry name" value="Ribosomal_bL28/bL31-like_sf"/>
</dbReference>
<dbReference type="InterPro" id="IPR001383">
    <property type="entry name" value="Ribosomal_bL28_bact-type"/>
</dbReference>
<dbReference type="InterPro" id="IPR037147">
    <property type="entry name" value="Ribosomal_bL28_sf"/>
</dbReference>
<dbReference type="NCBIfam" id="TIGR00009">
    <property type="entry name" value="L28"/>
    <property type="match status" value="1"/>
</dbReference>
<dbReference type="PANTHER" id="PTHR13528">
    <property type="entry name" value="39S RIBOSOMAL PROTEIN L28, MITOCHONDRIAL"/>
    <property type="match status" value="1"/>
</dbReference>
<dbReference type="PANTHER" id="PTHR13528:SF2">
    <property type="entry name" value="LARGE RIBOSOMAL SUBUNIT PROTEIN BL28M"/>
    <property type="match status" value="1"/>
</dbReference>
<dbReference type="Pfam" id="PF00830">
    <property type="entry name" value="Ribosomal_L28"/>
    <property type="match status" value="1"/>
</dbReference>
<dbReference type="SUPFAM" id="SSF143800">
    <property type="entry name" value="L28p-like"/>
    <property type="match status" value="1"/>
</dbReference>
<feature type="chain" id="PRO_1000007268" description="Large ribosomal subunit protein bL28">
    <location>
        <begin position="1"/>
        <end position="78"/>
    </location>
</feature>
<reference key="1">
    <citation type="submission" date="2006-11" db="EMBL/GenBank/DDBJ databases">
        <title>Identification and characterization of a new conjugation/ type IVA secretion system (trb/tra) of L. pneumophila Corby localized on a mobile genomic island.</title>
        <authorList>
            <person name="Gloeckner G."/>
            <person name="Albert-Weissenberger C."/>
            <person name="Weinmann E."/>
            <person name="Jacobi S."/>
            <person name="Schunder E."/>
            <person name="Steinert M."/>
            <person name="Buchrieser C."/>
            <person name="Hacker J."/>
            <person name="Heuner K."/>
        </authorList>
    </citation>
    <scope>NUCLEOTIDE SEQUENCE [LARGE SCALE GENOMIC DNA]</scope>
    <source>
        <strain>Corby</strain>
    </source>
</reference>
<gene>
    <name evidence="1" type="primary">rpmB</name>
    <name type="ordered locus">LPC_2865</name>
</gene>
<evidence type="ECO:0000255" key="1">
    <source>
        <dbReference type="HAMAP-Rule" id="MF_00373"/>
    </source>
</evidence>
<evidence type="ECO:0000305" key="2"/>